<feature type="chain" id="PRO_0000263840" description="Translation initiation factor IF-1">
    <location>
        <begin position="1"/>
        <end position="72"/>
    </location>
</feature>
<feature type="domain" description="S1-like" evidence="1">
    <location>
        <begin position="1"/>
        <end position="72"/>
    </location>
</feature>
<evidence type="ECO:0000255" key="1">
    <source>
        <dbReference type="HAMAP-Rule" id="MF_00075"/>
    </source>
</evidence>
<sequence length="72" mass="8303">MSKEDSFEMEGTVVDTLPNTMFRVELENGHVVTAHISGKMRKNYIRILTGDKVRVELTPYDLSKGRITYRAR</sequence>
<proteinExistence type="inferred from homology"/>
<protein>
    <recommendedName>
        <fullName evidence="1">Translation initiation factor IF-1</fullName>
    </recommendedName>
</protein>
<keyword id="KW-0963">Cytoplasm</keyword>
<keyword id="KW-0396">Initiation factor</keyword>
<keyword id="KW-0648">Protein biosynthesis</keyword>
<keyword id="KW-0694">RNA-binding</keyword>
<keyword id="KW-0699">rRNA-binding</keyword>
<organism>
    <name type="scientific">Pseudomonas fluorescens (strain ATCC BAA-477 / NRRL B-23932 / Pf-5)</name>
    <dbReference type="NCBI Taxonomy" id="220664"/>
    <lineage>
        <taxon>Bacteria</taxon>
        <taxon>Pseudomonadati</taxon>
        <taxon>Pseudomonadota</taxon>
        <taxon>Gammaproteobacteria</taxon>
        <taxon>Pseudomonadales</taxon>
        <taxon>Pseudomonadaceae</taxon>
        <taxon>Pseudomonas</taxon>
    </lineage>
</organism>
<gene>
    <name evidence="1" type="primary">infA</name>
    <name type="ordered locus">PFL_3884</name>
</gene>
<name>IF1_PSEF5</name>
<accession>Q4K9U9</accession>
<reference key="1">
    <citation type="journal article" date="2005" name="Nat. Biotechnol.">
        <title>Complete genome sequence of the plant commensal Pseudomonas fluorescens Pf-5.</title>
        <authorList>
            <person name="Paulsen I.T."/>
            <person name="Press C.M."/>
            <person name="Ravel J."/>
            <person name="Kobayashi D.Y."/>
            <person name="Myers G.S.A."/>
            <person name="Mavrodi D.V."/>
            <person name="DeBoy R.T."/>
            <person name="Seshadri R."/>
            <person name="Ren Q."/>
            <person name="Madupu R."/>
            <person name="Dodson R.J."/>
            <person name="Durkin A.S."/>
            <person name="Brinkac L.M."/>
            <person name="Daugherty S.C."/>
            <person name="Sullivan S.A."/>
            <person name="Rosovitz M.J."/>
            <person name="Gwinn M.L."/>
            <person name="Zhou L."/>
            <person name="Schneider D.J."/>
            <person name="Cartinhour S.W."/>
            <person name="Nelson W.C."/>
            <person name="Weidman J."/>
            <person name="Watkins K."/>
            <person name="Tran K."/>
            <person name="Khouri H."/>
            <person name="Pierson E.A."/>
            <person name="Pierson L.S. III"/>
            <person name="Thomashow L.S."/>
            <person name="Loper J.E."/>
        </authorList>
    </citation>
    <scope>NUCLEOTIDE SEQUENCE [LARGE SCALE GENOMIC DNA]</scope>
    <source>
        <strain>ATCC BAA-477 / NRRL B-23932 / Pf-5</strain>
    </source>
</reference>
<comment type="function">
    <text evidence="1">One of the essential components for the initiation of protein synthesis. Stabilizes the binding of IF-2 and IF-3 on the 30S subunit to which N-formylmethionyl-tRNA(fMet) subsequently binds. Helps modulate mRNA selection, yielding the 30S pre-initiation complex (PIC). Upon addition of the 50S ribosomal subunit IF-1, IF-2 and IF-3 are released leaving the mature 70S translation initiation complex.</text>
</comment>
<comment type="subunit">
    <text evidence="1">Component of the 30S ribosomal translation pre-initiation complex which assembles on the 30S ribosome in the order IF-2 and IF-3, IF-1 and N-formylmethionyl-tRNA(fMet); mRNA recruitment can occur at any time during PIC assembly.</text>
</comment>
<comment type="subcellular location">
    <subcellularLocation>
        <location evidence="1">Cytoplasm</location>
    </subcellularLocation>
</comment>
<comment type="similarity">
    <text evidence="1">Belongs to the IF-1 family.</text>
</comment>
<dbReference type="EMBL" id="CP000076">
    <property type="protein sequence ID" value="AAY93148.1"/>
    <property type="molecule type" value="Genomic_DNA"/>
</dbReference>
<dbReference type="RefSeq" id="WP_002553999.1">
    <property type="nucleotide sequence ID" value="NC_004129.6"/>
</dbReference>
<dbReference type="SMR" id="Q4K9U9"/>
<dbReference type="STRING" id="220664.PFL_3884"/>
<dbReference type="GeneID" id="98638452"/>
<dbReference type="KEGG" id="pfl:PFL_3884"/>
<dbReference type="eggNOG" id="COG0361">
    <property type="taxonomic scope" value="Bacteria"/>
</dbReference>
<dbReference type="HOGENOM" id="CLU_151267_1_0_6"/>
<dbReference type="Proteomes" id="UP000008540">
    <property type="component" value="Chromosome"/>
</dbReference>
<dbReference type="GO" id="GO:0005829">
    <property type="term" value="C:cytosol"/>
    <property type="evidence" value="ECO:0007669"/>
    <property type="project" value="TreeGrafter"/>
</dbReference>
<dbReference type="GO" id="GO:0043022">
    <property type="term" value="F:ribosome binding"/>
    <property type="evidence" value="ECO:0007669"/>
    <property type="project" value="UniProtKB-UniRule"/>
</dbReference>
<dbReference type="GO" id="GO:0019843">
    <property type="term" value="F:rRNA binding"/>
    <property type="evidence" value="ECO:0007669"/>
    <property type="project" value="UniProtKB-UniRule"/>
</dbReference>
<dbReference type="GO" id="GO:0003743">
    <property type="term" value="F:translation initiation factor activity"/>
    <property type="evidence" value="ECO:0007669"/>
    <property type="project" value="UniProtKB-UniRule"/>
</dbReference>
<dbReference type="CDD" id="cd04451">
    <property type="entry name" value="S1_IF1"/>
    <property type="match status" value="1"/>
</dbReference>
<dbReference type="FunFam" id="2.40.50.140:FF:000002">
    <property type="entry name" value="Translation initiation factor IF-1"/>
    <property type="match status" value="1"/>
</dbReference>
<dbReference type="Gene3D" id="2.40.50.140">
    <property type="entry name" value="Nucleic acid-binding proteins"/>
    <property type="match status" value="1"/>
</dbReference>
<dbReference type="HAMAP" id="MF_00075">
    <property type="entry name" value="IF_1"/>
    <property type="match status" value="1"/>
</dbReference>
<dbReference type="InterPro" id="IPR012340">
    <property type="entry name" value="NA-bd_OB-fold"/>
</dbReference>
<dbReference type="InterPro" id="IPR006196">
    <property type="entry name" value="RNA-binding_domain_S1_IF1"/>
</dbReference>
<dbReference type="InterPro" id="IPR003029">
    <property type="entry name" value="S1_domain"/>
</dbReference>
<dbReference type="InterPro" id="IPR004368">
    <property type="entry name" value="TIF_IF1"/>
</dbReference>
<dbReference type="NCBIfam" id="TIGR00008">
    <property type="entry name" value="infA"/>
    <property type="match status" value="1"/>
</dbReference>
<dbReference type="PANTHER" id="PTHR33370">
    <property type="entry name" value="TRANSLATION INITIATION FACTOR IF-1, CHLOROPLASTIC"/>
    <property type="match status" value="1"/>
</dbReference>
<dbReference type="PANTHER" id="PTHR33370:SF1">
    <property type="entry name" value="TRANSLATION INITIATION FACTOR IF-1, CHLOROPLASTIC"/>
    <property type="match status" value="1"/>
</dbReference>
<dbReference type="Pfam" id="PF01176">
    <property type="entry name" value="eIF-1a"/>
    <property type="match status" value="1"/>
</dbReference>
<dbReference type="SMART" id="SM00316">
    <property type="entry name" value="S1"/>
    <property type="match status" value="1"/>
</dbReference>
<dbReference type="SUPFAM" id="SSF50249">
    <property type="entry name" value="Nucleic acid-binding proteins"/>
    <property type="match status" value="1"/>
</dbReference>
<dbReference type="PROSITE" id="PS50832">
    <property type="entry name" value="S1_IF1_TYPE"/>
    <property type="match status" value="1"/>
</dbReference>